<keyword id="KW-0963">Cytoplasm</keyword>
<keyword id="KW-0269">Exonuclease</keyword>
<keyword id="KW-0378">Hydrolase</keyword>
<keyword id="KW-0460">Magnesium</keyword>
<keyword id="KW-0479">Metal-binding</keyword>
<keyword id="KW-0540">Nuclease</keyword>
<keyword id="KW-1185">Reference proteome</keyword>
<protein>
    <recommendedName>
        <fullName evidence="1">3'-5' ssDNA/RNA exonuclease TatD</fullName>
        <ecNumber evidence="1">3.1.11.-</ecNumber>
        <ecNumber evidence="1">3.1.13.-</ecNumber>
    </recommendedName>
    <alternativeName>
        <fullName evidence="1">DNase TatD</fullName>
    </alternativeName>
</protein>
<gene>
    <name evidence="1" type="primary">tatD</name>
    <name type="ordered locus">ETAE_0153</name>
</gene>
<accession>D0Z9R0</accession>
<evidence type="ECO:0000255" key="1">
    <source>
        <dbReference type="HAMAP-Rule" id="MF_00901"/>
    </source>
</evidence>
<sequence>MLDIGVNLTNGQFSGDVPQVVARARQAGLNGMIITGTNLTESAQALHLAQAYPDFCWATAGVHPHDAHRWNENSAADLEPLLRSPAVVAVGECGLDFARNFSTPAQQEAAFEAQLALAAQIGKPVFLHCREAHARFIALLRPWLSRLPGAVLHCFTGTRDELDACLSLGLYIGITGWICDERRGMPLRALLPHIPAERLLLETDAPYLLPRDIQPKPKSRRNEPCFLPHIAEQAARWRQQDANWLKQVTENNARQLFRLA</sequence>
<feature type="chain" id="PRO_0000412735" description="3'-5' ssDNA/RNA exonuclease TatD">
    <location>
        <begin position="1"/>
        <end position="260"/>
    </location>
</feature>
<feature type="binding site" evidence="1">
    <location>
        <position position="92"/>
    </location>
    <ligand>
        <name>a divalent metal cation</name>
        <dbReference type="ChEBI" id="CHEBI:60240"/>
    </ligand>
</feature>
<feature type="binding site" evidence="1">
    <location>
        <position position="128"/>
    </location>
    <ligand>
        <name>a divalent metal cation</name>
        <dbReference type="ChEBI" id="CHEBI:60240"/>
    </ligand>
</feature>
<feature type="binding site" evidence="1">
    <location>
        <position position="153"/>
    </location>
    <ligand>
        <name>a divalent metal cation</name>
        <dbReference type="ChEBI" id="CHEBI:60240"/>
    </ligand>
</feature>
<proteinExistence type="inferred from homology"/>
<dbReference type="EC" id="3.1.11.-" evidence="1"/>
<dbReference type="EC" id="3.1.13.-" evidence="1"/>
<dbReference type="EMBL" id="CP001135">
    <property type="protein sequence ID" value="ACY83000.1"/>
    <property type="molecule type" value="Genomic_DNA"/>
</dbReference>
<dbReference type="RefSeq" id="WP_012847033.1">
    <property type="nucleotide sequence ID" value="NC_013508.1"/>
</dbReference>
<dbReference type="SMR" id="D0Z9R0"/>
<dbReference type="GeneID" id="72527049"/>
<dbReference type="KEGG" id="etr:ETAE_0153"/>
<dbReference type="HOGENOM" id="CLU_031506_1_2_6"/>
<dbReference type="OrthoDB" id="9810005at2"/>
<dbReference type="Proteomes" id="UP000002634">
    <property type="component" value="Chromosome"/>
</dbReference>
<dbReference type="GO" id="GO:0005737">
    <property type="term" value="C:cytoplasm"/>
    <property type="evidence" value="ECO:0007669"/>
    <property type="project" value="UniProtKB-SubCell"/>
</dbReference>
<dbReference type="GO" id="GO:0000175">
    <property type="term" value="F:3'-5'-RNA exonuclease activity"/>
    <property type="evidence" value="ECO:0007669"/>
    <property type="project" value="UniProtKB-UniRule"/>
</dbReference>
<dbReference type="GO" id="GO:0000287">
    <property type="term" value="F:magnesium ion binding"/>
    <property type="evidence" value="ECO:0007669"/>
    <property type="project" value="UniProtKB-UniRule"/>
</dbReference>
<dbReference type="GO" id="GO:0008310">
    <property type="term" value="F:single-stranded DNA 3'-5' DNA exonuclease activity"/>
    <property type="evidence" value="ECO:0007669"/>
    <property type="project" value="UniProtKB-UniRule"/>
</dbReference>
<dbReference type="CDD" id="cd01310">
    <property type="entry name" value="TatD_DNAse"/>
    <property type="match status" value="1"/>
</dbReference>
<dbReference type="FunFam" id="3.20.20.140:FF:000018">
    <property type="entry name" value="3'-5' ssDNA/RNA exonuclease TatD"/>
    <property type="match status" value="1"/>
</dbReference>
<dbReference type="Gene3D" id="3.20.20.140">
    <property type="entry name" value="Metal-dependent hydrolases"/>
    <property type="match status" value="1"/>
</dbReference>
<dbReference type="HAMAP" id="MF_00901">
    <property type="entry name" value="TatD_exonuclease"/>
    <property type="match status" value="1"/>
</dbReference>
<dbReference type="InterPro" id="IPR018228">
    <property type="entry name" value="DNase_TatD-rel_CS"/>
</dbReference>
<dbReference type="InterPro" id="IPR024918">
    <property type="entry name" value="Exonuc_TatD"/>
</dbReference>
<dbReference type="InterPro" id="IPR032466">
    <property type="entry name" value="Metal_Hydrolase"/>
</dbReference>
<dbReference type="InterPro" id="IPR001130">
    <property type="entry name" value="TatD-like"/>
</dbReference>
<dbReference type="InterPro" id="IPR050891">
    <property type="entry name" value="TatD-type_Hydrolase"/>
</dbReference>
<dbReference type="NCBIfam" id="NF007745">
    <property type="entry name" value="PRK10425.1"/>
    <property type="match status" value="1"/>
</dbReference>
<dbReference type="PANTHER" id="PTHR10060:SF15">
    <property type="entry name" value="DEOXYRIBONUCLEASE TATDN1"/>
    <property type="match status" value="1"/>
</dbReference>
<dbReference type="PANTHER" id="PTHR10060">
    <property type="entry name" value="TATD FAMILY DEOXYRIBONUCLEASE"/>
    <property type="match status" value="1"/>
</dbReference>
<dbReference type="Pfam" id="PF01026">
    <property type="entry name" value="TatD_DNase"/>
    <property type="match status" value="1"/>
</dbReference>
<dbReference type="PIRSF" id="PIRSF005902">
    <property type="entry name" value="DNase_TatD"/>
    <property type="match status" value="1"/>
</dbReference>
<dbReference type="SUPFAM" id="SSF51556">
    <property type="entry name" value="Metallo-dependent hydrolases"/>
    <property type="match status" value="1"/>
</dbReference>
<dbReference type="PROSITE" id="PS01091">
    <property type="entry name" value="TATD_3"/>
    <property type="match status" value="1"/>
</dbReference>
<reference key="1">
    <citation type="journal article" date="2009" name="PLoS ONE">
        <title>Genome sequence of the versatile fish pathogen Edwardsiella tarda provides insights into its adaptation to broad host ranges and intracellular niches.</title>
        <authorList>
            <person name="Wang Q."/>
            <person name="Yang M."/>
            <person name="Xiao J."/>
            <person name="Wu H."/>
            <person name="Wang X."/>
            <person name="Lv Y."/>
            <person name="Xu L."/>
            <person name="Zheng H."/>
            <person name="Wang S."/>
            <person name="Zhao G."/>
            <person name="Liu Q."/>
            <person name="Zhang Y."/>
        </authorList>
    </citation>
    <scope>NUCLEOTIDE SEQUENCE [LARGE SCALE GENOMIC DNA]</scope>
    <source>
        <strain>EIB202 / CCTCC M208068</strain>
    </source>
</reference>
<comment type="function">
    <text evidence="1">3'-5' exonuclease that prefers single-stranded DNA and RNA. May play a role in the H(2)O(2)-induced DNA damage repair.</text>
</comment>
<comment type="cofactor">
    <cofactor evidence="1">
        <name>Mg(2+)</name>
        <dbReference type="ChEBI" id="CHEBI:18420"/>
    </cofactor>
</comment>
<comment type="subunit">
    <text evidence="1">Monomer.</text>
</comment>
<comment type="subcellular location">
    <subcellularLocation>
        <location evidence="1">Cytoplasm</location>
    </subcellularLocation>
</comment>
<comment type="similarity">
    <text evidence="1">Belongs to the metallo-dependent hydrolases superfamily. TatD-type hydrolase family. TatD subfamily.</text>
</comment>
<name>TATD_EDWPI</name>
<organism>
    <name type="scientific">Edwardsiella piscicida</name>
    <dbReference type="NCBI Taxonomy" id="1263550"/>
    <lineage>
        <taxon>Bacteria</taxon>
        <taxon>Pseudomonadati</taxon>
        <taxon>Pseudomonadota</taxon>
        <taxon>Gammaproteobacteria</taxon>
        <taxon>Enterobacterales</taxon>
        <taxon>Hafniaceae</taxon>
        <taxon>Edwardsiella</taxon>
    </lineage>
</organism>